<feature type="signal peptide" evidence="2">
    <location>
        <begin position="1"/>
        <end position="16"/>
    </location>
</feature>
<feature type="chain" id="PRO_0000026930" description="Probable periplasmic serine endoprotease DegP-like">
    <location>
        <begin position="17"/>
        <end position="497"/>
    </location>
</feature>
<feature type="domain" description="PDZ 1" evidence="3">
    <location>
        <begin position="290"/>
        <end position="381"/>
    </location>
</feature>
<feature type="domain" description="PDZ 2" evidence="3">
    <location>
        <begin position="394"/>
        <end position="485"/>
    </location>
</feature>
<feature type="region of interest" description="Serine protease">
    <location>
        <begin position="128"/>
        <end position="289"/>
    </location>
</feature>
<feature type="active site" description="Charge relay system" evidence="2">
    <location>
        <position position="143"/>
    </location>
</feature>
<feature type="active site" description="Charge relay system" evidence="2">
    <location>
        <position position="173"/>
    </location>
</feature>
<feature type="active site" description="Charge relay system" evidence="2">
    <location>
        <position position="247"/>
    </location>
</feature>
<feature type="binding site" evidence="1">
    <location>
        <begin position="245"/>
        <end position="247"/>
    </location>
    <ligand>
        <name>substrate</name>
    </ligand>
</feature>
<feature type="binding site" evidence="1">
    <location>
        <begin position="302"/>
        <end position="306"/>
    </location>
    <ligand>
        <name>substrate</name>
    </ligand>
</feature>
<sequence>MMKRLLCVLLSTSVFSSPMLGYSAPKKDSSTGICLAASQSDRELSQEDLLKEVSRGFSKVAAQATPGVVYIENFPKTGSQAIASPGNKRGFQENPFDYFNDEFFNRFFGLPSHREQPRPQQRDAVRGTGFIVSEDGYVVTNHHVVEDAGKIHVTLHDGQKYTAKIIGLDPKTDLAVIKIQAKNLPFLTFGNSDQLQIGDWSIAIGNPFGLQATVTVGVISAKGRNQLHIVDFEDFIQTDAAINPGNSGGPLLNIDGQVIGVNTAIVSGSGGYIGIGFAIPSLMAKRVIDQLISDGQVTRGFLGVTLQPIDSELAACYKLEKVYGALITDVVKGSPAEKAGLRQEDVIVAYNGKEVESLSALRNAISLMMPGTRVVLKVVREGKFIEIPVTVTQIPAEDGVSALQKMGVRVQNLTPEICKKLGLASDTRGIFVVSVEAGSPAASAGVVPGQLILAVNRQRVSSVEELNQVLKNAKGENVLLMVSQGEVIRFVVLKSDE</sequence>
<reference key="1">
    <citation type="journal article" date="2000" name="Nucleic Acids Res.">
        <title>Genome sequences of Chlamydia trachomatis MoPn and Chlamydia pneumoniae AR39.</title>
        <authorList>
            <person name="Read T.D."/>
            <person name="Brunham R.C."/>
            <person name="Shen C."/>
            <person name="Gill S.R."/>
            <person name="Heidelberg J.F."/>
            <person name="White O."/>
            <person name="Hickey E.K."/>
            <person name="Peterson J.D."/>
            <person name="Utterback T.R."/>
            <person name="Berry K.J."/>
            <person name="Bass S."/>
            <person name="Linher K.D."/>
            <person name="Weidman J.F."/>
            <person name="Khouri H.M."/>
            <person name="Craven B."/>
            <person name="Bowman C."/>
            <person name="Dodson R.J."/>
            <person name="Gwinn M.L."/>
            <person name="Nelson W.C."/>
            <person name="DeBoy R.T."/>
            <person name="Kolonay J.F."/>
            <person name="McClarty G."/>
            <person name="Salzberg S.L."/>
            <person name="Eisen J.A."/>
            <person name="Fraser C.M."/>
        </authorList>
    </citation>
    <scope>NUCLEOTIDE SEQUENCE [LARGE SCALE GENOMIC DNA]</scope>
    <source>
        <strain>MoPn / Nigg</strain>
    </source>
</reference>
<name>DEGPL_CHLMU</name>
<comment type="function">
    <text evidence="1">Might be efficient in the degradation of transiently denatured and unfolded proteins which accumulate in the periplasm following stress conditions.</text>
</comment>
<comment type="catalytic activity">
    <reaction>
        <text>Acts on substrates that are at least partially unfolded. The cleavage site P1 residue is normally between a pair of hydrophobic residues, such as Val-|-Val.</text>
        <dbReference type="EC" id="3.4.21.107"/>
    </reaction>
</comment>
<comment type="subcellular location">
    <subcellularLocation>
        <location evidence="4">Periplasm</location>
    </subcellularLocation>
</comment>
<comment type="similarity">
    <text evidence="4">Belongs to the peptidase S1C family.</text>
</comment>
<accession>Q9PL97</accession>
<keyword id="KW-0378">Hydrolase</keyword>
<keyword id="KW-0574">Periplasm</keyword>
<keyword id="KW-0645">Protease</keyword>
<keyword id="KW-0677">Repeat</keyword>
<keyword id="KW-0720">Serine protease</keyword>
<keyword id="KW-0732">Signal</keyword>
<keyword id="KW-0346">Stress response</keyword>
<dbReference type="EC" id="3.4.21.107"/>
<dbReference type="EMBL" id="AE002160">
    <property type="protein sequence ID" value="AAF39082.1"/>
    <property type="molecule type" value="Genomic_DNA"/>
</dbReference>
<dbReference type="PIR" id="B81728">
    <property type="entry name" value="B81728"/>
</dbReference>
<dbReference type="RefSeq" id="WP_010229828.1">
    <property type="nucleotide sequence ID" value="NZ_CP063055.1"/>
</dbReference>
<dbReference type="SMR" id="Q9PL97"/>
<dbReference type="MEROPS" id="S01.480"/>
<dbReference type="GeneID" id="1246336"/>
<dbReference type="KEGG" id="cmu:TC_0210"/>
<dbReference type="eggNOG" id="COG0265">
    <property type="taxonomic scope" value="Bacteria"/>
</dbReference>
<dbReference type="HOGENOM" id="CLU_020120_1_0_0"/>
<dbReference type="OrthoDB" id="9758917at2"/>
<dbReference type="Proteomes" id="UP000000800">
    <property type="component" value="Chromosome"/>
</dbReference>
<dbReference type="GO" id="GO:0030288">
    <property type="term" value="C:outer membrane-bounded periplasmic space"/>
    <property type="evidence" value="ECO:0000250"/>
    <property type="project" value="UniProtKB"/>
</dbReference>
<dbReference type="GO" id="GO:0004252">
    <property type="term" value="F:serine-type endopeptidase activity"/>
    <property type="evidence" value="ECO:0000250"/>
    <property type="project" value="UniProtKB"/>
</dbReference>
<dbReference type="GO" id="GO:0006508">
    <property type="term" value="P:proteolysis"/>
    <property type="evidence" value="ECO:0007669"/>
    <property type="project" value="UniProtKB-KW"/>
</dbReference>
<dbReference type="CDD" id="cd10839">
    <property type="entry name" value="cpPDZ1_DegP-like"/>
    <property type="match status" value="1"/>
</dbReference>
<dbReference type="FunFam" id="2.30.42.10:FF:000037">
    <property type="entry name" value="Periplasmic serine endoprotease DegP-like"/>
    <property type="match status" value="1"/>
</dbReference>
<dbReference type="FunFam" id="2.40.10.120:FF:000007">
    <property type="entry name" value="Periplasmic serine endoprotease DegP-like"/>
    <property type="match status" value="1"/>
</dbReference>
<dbReference type="Gene3D" id="2.30.42.10">
    <property type="match status" value="2"/>
</dbReference>
<dbReference type="Gene3D" id="2.40.10.120">
    <property type="match status" value="1"/>
</dbReference>
<dbReference type="InterPro" id="IPR001478">
    <property type="entry name" value="PDZ"/>
</dbReference>
<dbReference type="InterPro" id="IPR041489">
    <property type="entry name" value="PDZ_6"/>
</dbReference>
<dbReference type="InterPro" id="IPR036034">
    <property type="entry name" value="PDZ_sf"/>
</dbReference>
<dbReference type="InterPro" id="IPR011782">
    <property type="entry name" value="Pept_S1C_Do"/>
</dbReference>
<dbReference type="InterPro" id="IPR009003">
    <property type="entry name" value="Peptidase_S1_PA"/>
</dbReference>
<dbReference type="InterPro" id="IPR001940">
    <property type="entry name" value="Peptidase_S1C"/>
</dbReference>
<dbReference type="NCBIfam" id="TIGR02037">
    <property type="entry name" value="degP_htrA_DO"/>
    <property type="match status" value="1"/>
</dbReference>
<dbReference type="PANTHER" id="PTHR22939">
    <property type="entry name" value="SERINE PROTEASE FAMILY S1C HTRA-RELATED"/>
    <property type="match status" value="1"/>
</dbReference>
<dbReference type="PANTHER" id="PTHR22939:SF129">
    <property type="entry name" value="SERINE PROTEASE HTRA2, MITOCHONDRIAL"/>
    <property type="match status" value="1"/>
</dbReference>
<dbReference type="Pfam" id="PF13180">
    <property type="entry name" value="PDZ_2"/>
    <property type="match status" value="1"/>
</dbReference>
<dbReference type="Pfam" id="PF17820">
    <property type="entry name" value="PDZ_6"/>
    <property type="match status" value="1"/>
</dbReference>
<dbReference type="Pfam" id="PF13365">
    <property type="entry name" value="Trypsin_2"/>
    <property type="match status" value="1"/>
</dbReference>
<dbReference type="PRINTS" id="PR00834">
    <property type="entry name" value="PROTEASES2C"/>
</dbReference>
<dbReference type="SMART" id="SM00228">
    <property type="entry name" value="PDZ"/>
    <property type="match status" value="2"/>
</dbReference>
<dbReference type="SUPFAM" id="SSF50156">
    <property type="entry name" value="PDZ domain-like"/>
    <property type="match status" value="2"/>
</dbReference>
<dbReference type="SUPFAM" id="SSF50494">
    <property type="entry name" value="Trypsin-like serine proteases"/>
    <property type="match status" value="1"/>
</dbReference>
<dbReference type="PROSITE" id="PS50106">
    <property type="entry name" value="PDZ"/>
    <property type="match status" value="2"/>
</dbReference>
<proteinExistence type="inferred from homology"/>
<evidence type="ECO:0000250" key="1"/>
<evidence type="ECO:0000255" key="2"/>
<evidence type="ECO:0000255" key="3">
    <source>
        <dbReference type="PROSITE-ProRule" id="PRU00143"/>
    </source>
</evidence>
<evidence type="ECO:0000305" key="4"/>
<organism>
    <name type="scientific">Chlamydia muridarum (strain MoPn / Nigg)</name>
    <dbReference type="NCBI Taxonomy" id="243161"/>
    <lineage>
        <taxon>Bacteria</taxon>
        <taxon>Pseudomonadati</taxon>
        <taxon>Chlamydiota</taxon>
        <taxon>Chlamydiia</taxon>
        <taxon>Chlamydiales</taxon>
        <taxon>Chlamydiaceae</taxon>
        <taxon>Chlamydia/Chlamydophila group</taxon>
        <taxon>Chlamydia</taxon>
    </lineage>
</organism>
<protein>
    <recommendedName>
        <fullName>Probable periplasmic serine endoprotease DegP-like</fullName>
        <ecNumber>3.4.21.107</ecNumber>
    </recommendedName>
    <alternativeName>
        <fullName>Protease Do</fullName>
    </alternativeName>
</protein>
<gene>
    <name type="primary">htrA</name>
    <name type="ordered locus">TC_0210</name>
</gene>